<proteinExistence type="inferred from homology"/>
<protein>
    <recommendedName>
        <fullName evidence="1">Holliday junction branch migration complex subunit RuvB</fullName>
        <ecNumber evidence="1">3.6.4.-</ecNumber>
    </recommendedName>
</protein>
<accession>B8JF05</accession>
<dbReference type="EC" id="3.6.4.-" evidence="1"/>
<dbReference type="EMBL" id="CP001359">
    <property type="protein sequence ID" value="ACL64362.1"/>
    <property type="molecule type" value="Genomic_DNA"/>
</dbReference>
<dbReference type="RefSeq" id="WP_012525076.1">
    <property type="nucleotide sequence ID" value="NC_011891.1"/>
</dbReference>
<dbReference type="SMR" id="B8JF05"/>
<dbReference type="KEGG" id="acp:A2cp1_1011"/>
<dbReference type="HOGENOM" id="CLU_055599_1_0_7"/>
<dbReference type="Proteomes" id="UP000007089">
    <property type="component" value="Chromosome"/>
</dbReference>
<dbReference type="GO" id="GO:0005737">
    <property type="term" value="C:cytoplasm"/>
    <property type="evidence" value="ECO:0007669"/>
    <property type="project" value="UniProtKB-SubCell"/>
</dbReference>
<dbReference type="GO" id="GO:0048476">
    <property type="term" value="C:Holliday junction resolvase complex"/>
    <property type="evidence" value="ECO:0007669"/>
    <property type="project" value="UniProtKB-UniRule"/>
</dbReference>
<dbReference type="GO" id="GO:0005524">
    <property type="term" value="F:ATP binding"/>
    <property type="evidence" value="ECO:0007669"/>
    <property type="project" value="UniProtKB-UniRule"/>
</dbReference>
<dbReference type="GO" id="GO:0016887">
    <property type="term" value="F:ATP hydrolysis activity"/>
    <property type="evidence" value="ECO:0007669"/>
    <property type="project" value="InterPro"/>
</dbReference>
<dbReference type="GO" id="GO:0000400">
    <property type="term" value="F:four-way junction DNA binding"/>
    <property type="evidence" value="ECO:0007669"/>
    <property type="project" value="UniProtKB-UniRule"/>
</dbReference>
<dbReference type="GO" id="GO:0009378">
    <property type="term" value="F:four-way junction helicase activity"/>
    <property type="evidence" value="ECO:0007669"/>
    <property type="project" value="InterPro"/>
</dbReference>
<dbReference type="GO" id="GO:0006310">
    <property type="term" value="P:DNA recombination"/>
    <property type="evidence" value="ECO:0007669"/>
    <property type="project" value="UniProtKB-UniRule"/>
</dbReference>
<dbReference type="GO" id="GO:0006281">
    <property type="term" value="P:DNA repair"/>
    <property type="evidence" value="ECO:0007669"/>
    <property type="project" value="UniProtKB-UniRule"/>
</dbReference>
<dbReference type="CDD" id="cd00009">
    <property type="entry name" value="AAA"/>
    <property type="match status" value="1"/>
</dbReference>
<dbReference type="Gene3D" id="1.10.8.60">
    <property type="match status" value="1"/>
</dbReference>
<dbReference type="Gene3D" id="3.40.50.300">
    <property type="entry name" value="P-loop containing nucleotide triphosphate hydrolases"/>
    <property type="match status" value="1"/>
</dbReference>
<dbReference type="Gene3D" id="1.10.10.10">
    <property type="entry name" value="Winged helix-like DNA-binding domain superfamily/Winged helix DNA-binding domain"/>
    <property type="match status" value="1"/>
</dbReference>
<dbReference type="HAMAP" id="MF_00016">
    <property type="entry name" value="DNA_HJ_migration_RuvB"/>
    <property type="match status" value="1"/>
</dbReference>
<dbReference type="InterPro" id="IPR003593">
    <property type="entry name" value="AAA+_ATPase"/>
</dbReference>
<dbReference type="InterPro" id="IPR041445">
    <property type="entry name" value="AAA_lid_4"/>
</dbReference>
<dbReference type="InterPro" id="IPR000641">
    <property type="entry name" value="CbxX/CfxQ"/>
</dbReference>
<dbReference type="InterPro" id="IPR004605">
    <property type="entry name" value="DNA_helicase_Holl-junc_RuvB"/>
</dbReference>
<dbReference type="InterPro" id="IPR027417">
    <property type="entry name" value="P-loop_NTPase"/>
</dbReference>
<dbReference type="InterPro" id="IPR008824">
    <property type="entry name" value="RuvB-like_N"/>
</dbReference>
<dbReference type="InterPro" id="IPR008823">
    <property type="entry name" value="RuvB_C"/>
</dbReference>
<dbReference type="InterPro" id="IPR036388">
    <property type="entry name" value="WH-like_DNA-bd_sf"/>
</dbReference>
<dbReference type="InterPro" id="IPR036390">
    <property type="entry name" value="WH_DNA-bd_sf"/>
</dbReference>
<dbReference type="NCBIfam" id="NF000868">
    <property type="entry name" value="PRK00080.1"/>
    <property type="match status" value="1"/>
</dbReference>
<dbReference type="NCBIfam" id="TIGR00635">
    <property type="entry name" value="ruvB"/>
    <property type="match status" value="1"/>
</dbReference>
<dbReference type="PANTHER" id="PTHR42848">
    <property type="match status" value="1"/>
</dbReference>
<dbReference type="PANTHER" id="PTHR42848:SF1">
    <property type="entry name" value="HOLLIDAY JUNCTION BRANCH MIGRATION COMPLEX SUBUNIT RUVB"/>
    <property type="match status" value="1"/>
</dbReference>
<dbReference type="Pfam" id="PF17864">
    <property type="entry name" value="AAA_lid_4"/>
    <property type="match status" value="1"/>
</dbReference>
<dbReference type="Pfam" id="PF05491">
    <property type="entry name" value="RuvB_C"/>
    <property type="match status" value="1"/>
</dbReference>
<dbReference type="Pfam" id="PF05496">
    <property type="entry name" value="RuvB_N"/>
    <property type="match status" value="1"/>
</dbReference>
<dbReference type="PRINTS" id="PR00819">
    <property type="entry name" value="CBXCFQXSUPER"/>
</dbReference>
<dbReference type="SMART" id="SM00382">
    <property type="entry name" value="AAA"/>
    <property type="match status" value="1"/>
</dbReference>
<dbReference type="SUPFAM" id="SSF52540">
    <property type="entry name" value="P-loop containing nucleoside triphosphate hydrolases"/>
    <property type="match status" value="1"/>
</dbReference>
<dbReference type="SUPFAM" id="SSF46785">
    <property type="entry name" value="Winged helix' DNA-binding domain"/>
    <property type="match status" value="1"/>
</dbReference>
<sequence>MTVKPLRDVTPKPLEGEERLEQSLRPATFDDYVGQVKIVDNVKVYAAAARQRGESLDHVLLSGPPGLGKTSLAHILARELGVTLHVTSGPALVKKGDLAGLLTALAPRDILFIDEIHRLSPAVEEALYPAMEDYRFDVVLGAGLGAQTMEMKLERFTLVGATTRTGLLASPLRDRFPIQERLEYYGPAELKEIAVRAARKLGLPVDEDGAEELARRARGTPRIAIRLLQRARDFAQVEGDGRLTREVVDRTLRRLEVDARGLDAMDRRILAAVIDTFGGGPVGIDAVAAAVGEESGTLEDVYEPFLVREGYLARTPRGRVALPAAYAHLGRDRPGGKQGSLV</sequence>
<feature type="chain" id="PRO_1000195193" description="Holliday junction branch migration complex subunit RuvB">
    <location>
        <begin position="1"/>
        <end position="342"/>
    </location>
</feature>
<feature type="region of interest" description="Large ATPase domain (RuvB-L)" evidence="1">
    <location>
        <begin position="1"/>
        <end position="185"/>
    </location>
</feature>
<feature type="region of interest" description="Small ATPAse domain (RuvB-S)" evidence="1">
    <location>
        <begin position="186"/>
        <end position="256"/>
    </location>
</feature>
<feature type="region of interest" description="Head domain (RuvB-H)" evidence="1">
    <location>
        <begin position="259"/>
        <end position="342"/>
    </location>
</feature>
<feature type="binding site" evidence="1">
    <location>
        <position position="24"/>
    </location>
    <ligand>
        <name>ATP</name>
        <dbReference type="ChEBI" id="CHEBI:30616"/>
    </ligand>
</feature>
<feature type="binding site" evidence="1">
    <location>
        <position position="25"/>
    </location>
    <ligand>
        <name>ATP</name>
        <dbReference type="ChEBI" id="CHEBI:30616"/>
    </ligand>
</feature>
<feature type="binding site" evidence="1">
    <location>
        <position position="66"/>
    </location>
    <ligand>
        <name>ATP</name>
        <dbReference type="ChEBI" id="CHEBI:30616"/>
    </ligand>
</feature>
<feature type="binding site" evidence="1">
    <location>
        <position position="69"/>
    </location>
    <ligand>
        <name>ATP</name>
        <dbReference type="ChEBI" id="CHEBI:30616"/>
    </ligand>
</feature>
<feature type="binding site" evidence="1">
    <location>
        <position position="70"/>
    </location>
    <ligand>
        <name>ATP</name>
        <dbReference type="ChEBI" id="CHEBI:30616"/>
    </ligand>
</feature>
<feature type="binding site" evidence="1">
    <location>
        <position position="70"/>
    </location>
    <ligand>
        <name>Mg(2+)</name>
        <dbReference type="ChEBI" id="CHEBI:18420"/>
    </ligand>
</feature>
<feature type="binding site" evidence="1">
    <location>
        <position position="71"/>
    </location>
    <ligand>
        <name>ATP</name>
        <dbReference type="ChEBI" id="CHEBI:30616"/>
    </ligand>
</feature>
<feature type="binding site" evidence="1">
    <location>
        <begin position="132"/>
        <end position="134"/>
    </location>
    <ligand>
        <name>ATP</name>
        <dbReference type="ChEBI" id="CHEBI:30616"/>
    </ligand>
</feature>
<feature type="binding site" evidence="1">
    <location>
        <position position="175"/>
    </location>
    <ligand>
        <name>ATP</name>
        <dbReference type="ChEBI" id="CHEBI:30616"/>
    </ligand>
</feature>
<feature type="binding site" evidence="1">
    <location>
        <position position="185"/>
    </location>
    <ligand>
        <name>ATP</name>
        <dbReference type="ChEBI" id="CHEBI:30616"/>
    </ligand>
</feature>
<feature type="binding site" evidence="1">
    <location>
        <position position="222"/>
    </location>
    <ligand>
        <name>ATP</name>
        <dbReference type="ChEBI" id="CHEBI:30616"/>
    </ligand>
</feature>
<feature type="binding site" evidence="1">
    <location>
        <position position="314"/>
    </location>
    <ligand>
        <name>DNA</name>
        <dbReference type="ChEBI" id="CHEBI:16991"/>
    </ligand>
</feature>
<feature type="binding site" evidence="1">
    <location>
        <position position="319"/>
    </location>
    <ligand>
        <name>DNA</name>
        <dbReference type="ChEBI" id="CHEBI:16991"/>
    </ligand>
</feature>
<keyword id="KW-0067">ATP-binding</keyword>
<keyword id="KW-0963">Cytoplasm</keyword>
<keyword id="KW-0227">DNA damage</keyword>
<keyword id="KW-0233">DNA recombination</keyword>
<keyword id="KW-0234">DNA repair</keyword>
<keyword id="KW-0238">DNA-binding</keyword>
<keyword id="KW-0378">Hydrolase</keyword>
<keyword id="KW-0547">Nucleotide-binding</keyword>
<organism>
    <name type="scientific">Anaeromyxobacter dehalogenans (strain 2CP-1 / ATCC BAA-258)</name>
    <dbReference type="NCBI Taxonomy" id="455488"/>
    <lineage>
        <taxon>Bacteria</taxon>
        <taxon>Pseudomonadati</taxon>
        <taxon>Myxococcota</taxon>
        <taxon>Myxococcia</taxon>
        <taxon>Myxococcales</taxon>
        <taxon>Cystobacterineae</taxon>
        <taxon>Anaeromyxobacteraceae</taxon>
        <taxon>Anaeromyxobacter</taxon>
    </lineage>
</organism>
<comment type="function">
    <text evidence="1">The RuvA-RuvB-RuvC complex processes Holliday junction (HJ) DNA during genetic recombination and DNA repair, while the RuvA-RuvB complex plays an important role in the rescue of blocked DNA replication forks via replication fork reversal (RFR). RuvA specifically binds to HJ cruciform DNA, conferring on it an open structure. The RuvB hexamer acts as an ATP-dependent pump, pulling dsDNA into and through the RuvAB complex. RuvB forms 2 homohexamers on either side of HJ DNA bound by 1 or 2 RuvA tetramers; 4 subunits per hexamer contact DNA at a time. Coordinated motions by a converter formed by DNA-disengaged RuvB subunits stimulates ATP hydrolysis and nucleotide exchange. Immobilization of the converter enables RuvB to convert the ATP-contained energy into a lever motion, pulling 2 nucleotides of DNA out of the RuvA tetramer per ATP hydrolyzed, thus driving DNA branch migration. The RuvB motors rotate together with the DNA substrate, which together with the progressing nucleotide cycle form the mechanistic basis for DNA recombination by continuous HJ branch migration. Branch migration allows RuvC to scan DNA until it finds its consensus sequence, where it cleaves and resolves cruciform DNA.</text>
</comment>
<comment type="catalytic activity">
    <reaction evidence="1">
        <text>ATP + H2O = ADP + phosphate + H(+)</text>
        <dbReference type="Rhea" id="RHEA:13065"/>
        <dbReference type="ChEBI" id="CHEBI:15377"/>
        <dbReference type="ChEBI" id="CHEBI:15378"/>
        <dbReference type="ChEBI" id="CHEBI:30616"/>
        <dbReference type="ChEBI" id="CHEBI:43474"/>
        <dbReference type="ChEBI" id="CHEBI:456216"/>
    </reaction>
</comment>
<comment type="subunit">
    <text evidence="1">Homohexamer. Forms an RuvA(8)-RuvB(12)-Holliday junction (HJ) complex. HJ DNA is sandwiched between 2 RuvA tetramers; dsDNA enters through RuvA and exits via RuvB. An RuvB hexamer assembles on each DNA strand where it exits the tetramer. Each RuvB hexamer is contacted by two RuvA subunits (via domain III) on 2 adjacent RuvB subunits; this complex drives branch migration. In the full resolvosome a probable DNA-RuvA(4)-RuvB(12)-RuvC(2) complex forms which resolves the HJ.</text>
</comment>
<comment type="subcellular location">
    <subcellularLocation>
        <location evidence="1">Cytoplasm</location>
    </subcellularLocation>
</comment>
<comment type="domain">
    <text evidence="1">Has 3 domains, the large (RuvB-L) and small ATPase (RuvB-S) domains and the C-terminal head (RuvB-H) domain. The head domain binds DNA, while the ATPase domains jointly bind ATP, ADP or are empty depending on the state of the subunit in the translocation cycle. During a single DNA translocation step the structure of each domain remains the same, but their relative positions change.</text>
</comment>
<comment type="similarity">
    <text evidence="1">Belongs to the RuvB family.</text>
</comment>
<gene>
    <name evidence="1" type="primary">ruvB</name>
    <name type="ordered locus">A2cp1_1011</name>
</gene>
<evidence type="ECO:0000255" key="1">
    <source>
        <dbReference type="HAMAP-Rule" id="MF_00016"/>
    </source>
</evidence>
<name>RUVB_ANAD2</name>
<reference key="1">
    <citation type="submission" date="2009-01" db="EMBL/GenBank/DDBJ databases">
        <title>Complete sequence of Anaeromyxobacter dehalogenans 2CP-1.</title>
        <authorList>
            <person name="Lucas S."/>
            <person name="Copeland A."/>
            <person name="Lapidus A."/>
            <person name="Glavina del Rio T."/>
            <person name="Dalin E."/>
            <person name="Tice H."/>
            <person name="Bruce D."/>
            <person name="Goodwin L."/>
            <person name="Pitluck S."/>
            <person name="Saunders E."/>
            <person name="Brettin T."/>
            <person name="Detter J.C."/>
            <person name="Han C."/>
            <person name="Larimer F."/>
            <person name="Land M."/>
            <person name="Hauser L."/>
            <person name="Kyrpides N."/>
            <person name="Ovchinnikova G."/>
            <person name="Beliaev A.S."/>
            <person name="Richardson P."/>
        </authorList>
    </citation>
    <scope>NUCLEOTIDE SEQUENCE [LARGE SCALE GENOMIC DNA]</scope>
    <source>
        <strain>2CP-1 / ATCC BAA-258</strain>
    </source>
</reference>